<protein>
    <recommendedName>
        <fullName>Uncharacterized protein MJ0282</fullName>
    </recommendedName>
</protein>
<organism>
    <name type="scientific">Methanocaldococcus jannaschii (strain ATCC 43067 / DSM 2661 / JAL-1 / JCM 10045 / NBRC 100440)</name>
    <name type="common">Methanococcus jannaschii</name>
    <dbReference type="NCBI Taxonomy" id="243232"/>
    <lineage>
        <taxon>Archaea</taxon>
        <taxon>Methanobacteriati</taxon>
        <taxon>Methanobacteriota</taxon>
        <taxon>Methanomada group</taxon>
        <taxon>Methanococci</taxon>
        <taxon>Methanococcales</taxon>
        <taxon>Methanocaldococcaceae</taxon>
        <taxon>Methanocaldococcus</taxon>
    </lineage>
</organism>
<name>Y282_METJA</name>
<accession>Q57730</accession>
<feature type="chain" id="PRO_0000106771" description="Uncharacterized protein MJ0282">
    <location>
        <begin position="1"/>
        <end position="149"/>
    </location>
</feature>
<dbReference type="EMBL" id="L77117">
    <property type="protein sequence ID" value="AAB98270.1"/>
    <property type="molecule type" value="Genomic_DNA"/>
</dbReference>
<dbReference type="PIR" id="C64335">
    <property type="entry name" value="C64335"/>
</dbReference>
<dbReference type="SMR" id="Q57730"/>
<dbReference type="STRING" id="243232.MJ_0282"/>
<dbReference type="PaxDb" id="243232-MJ_0282"/>
<dbReference type="EnsemblBacteria" id="AAB98270">
    <property type="protein sequence ID" value="AAB98270"/>
    <property type="gene ID" value="MJ_0282"/>
</dbReference>
<dbReference type="KEGG" id="mja:MJ_0282"/>
<dbReference type="eggNOG" id="arCOG00518">
    <property type="taxonomic scope" value="Archaea"/>
</dbReference>
<dbReference type="HOGENOM" id="CLU_118461_1_0_2"/>
<dbReference type="InParanoid" id="Q57730"/>
<dbReference type="PhylomeDB" id="Q57730"/>
<dbReference type="Proteomes" id="UP000000805">
    <property type="component" value="Chromosome"/>
</dbReference>
<dbReference type="Gene3D" id="2.30.110.10">
    <property type="entry name" value="Electron Transport, Fmn-binding Protein, Chain A"/>
    <property type="match status" value="1"/>
</dbReference>
<dbReference type="InterPro" id="IPR011576">
    <property type="entry name" value="Pyridox_Oxase_N"/>
</dbReference>
<dbReference type="InterPro" id="IPR012349">
    <property type="entry name" value="Split_barrel_FMN-bd"/>
</dbReference>
<dbReference type="PANTHER" id="PTHR40660">
    <property type="entry name" value="5'-PHOSPHATE OXIDASE PUTATIVE DOMAIN-CONTAINING PROTEIN-RELATED"/>
    <property type="match status" value="1"/>
</dbReference>
<dbReference type="PANTHER" id="PTHR40660:SF1">
    <property type="entry name" value="5'-PHOSPHATE OXIDASE PUTATIVE DOMAIN-CONTAINING PROTEIN-RELATED"/>
    <property type="match status" value="1"/>
</dbReference>
<dbReference type="Pfam" id="PF01243">
    <property type="entry name" value="PNPOx_N"/>
    <property type="match status" value="1"/>
</dbReference>
<dbReference type="SUPFAM" id="SSF50475">
    <property type="entry name" value="FMN-binding split barrel"/>
    <property type="match status" value="1"/>
</dbReference>
<gene>
    <name type="ordered locus">MJ0282</name>
</gene>
<reference key="1">
    <citation type="journal article" date="1996" name="Science">
        <title>Complete genome sequence of the methanogenic archaeon, Methanococcus jannaschii.</title>
        <authorList>
            <person name="Bult C.J."/>
            <person name="White O."/>
            <person name="Olsen G.J."/>
            <person name="Zhou L."/>
            <person name="Fleischmann R.D."/>
            <person name="Sutton G.G."/>
            <person name="Blake J.A."/>
            <person name="FitzGerald L.M."/>
            <person name="Clayton R.A."/>
            <person name="Gocayne J.D."/>
            <person name="Kerlavage A.R."/>
            <person name="Dougherty B.A."/>
            <person name="Tomb J.-F."/>
            <person name="Adams M.D."/>
            <person name="Reich C.I."/>
            <person name="Overbeek R."/>
            <person name="Kirkness E.F."/>
            <person name="Weinstock K.G."/>
            <person name="Merrick J.M."/>
            <person name="Glodek A."/>
            <person name="Scott J.L."/>
            <person name="Geoghagen N.S.M."/>
            <person name="Weidman J.F."/>
            <person name="Fuhrmann J.L."/>
            <person name="Nguyen D."/>
            <person name="Utterback T.R."/>
            <person name="Kelley J.M."/>
            <person name="Peterson J.D."/>
            <person name="Sadow P.W."/>
            <person name="Hanna M.C."/>
            <person name="Cotton M.D."/>
            <person name="Roberts K.M."/>
            <person name="Hurst M.A."/>
            <person name="Kaine B.P."/>
            <person name="Borodovsky M."/>
            <person name="Klenk H.-P."/>
            <person name="Fraser C.M."/>
            <person name="Smith H.O."/>
            <person name="Woese C.R."/>
            <person name="Venter J.C."/>
        </authorList>
    </citation>
    <scope>NUCLEOTIDE SEQUENCE [LARGE SCALE GENOMIC DNA]</scope>
    <source>
        <strain>ATCC 43067 / DSM 2661 / JAL-1 / JCM 10045 / NBRC 100440</strain>
    </source>
</reference>
<sequence length="149" mass="16574">MKMFHKIYFGDSVVKLTEEMVKSLENEIVFIATASKDGVPNVAAMRAIKVLDAEKGIVLIADNFMNKTLKNILENPKVALTTANCKDMPYQYKGTAEYYKEGEYLKIAEEVDKALKPDLKPKGAVVIKITEIYNLKSGPDAGKLIAKDE</sequence>
<proteinExistence type="predicted"/>
<keyword id="KW-1185">Reference proteome</keyword>